<accession>Q42563</accession>
<accession>Q39004</accession>
<name>APT2_ARATH</name>
<comment type="function">
    <text evidence="2 3">Catalyzes a salvage reaction resulting in the formation of AMP, that is energically less costly than de novo synthesis. May contribute to the recycling of adenine into adenylate nucleotides and the inactivation of cytokinins by phosphoribosylation. Possesses low activity toward adenine and cytokinins.</text>
</comment>
<comment type="catalytic activity">
    <reaction evidence="2 3">
        <text>AMP + diphosphate = 5-phospho-alpha-D-ribose 1-diphosphate + adenine</text>
        <dbReference type="Rhea" id="RHEA:16609"/>
        <dbReference type="ChEBI" id="CHEBI:16708"/>
        <dbReference type="ChEBI" id="CHEBI:33019"/>
        <dbReference type="ChEBI" id="CHEBI:58017"/>
        <dbReference type="ChEBI" id="CHEBI:456215"/>
        <dbReference type="EC" id="2.4.2.7"/>
    </reaction>
</comment>
<comment type="biophysicochemical properties">
    <kinetics>
        <KM evidence="2">2.6 uM for adenine (at pH 7.4 and 37 degrees Celsius)</KM>
        <KM evidence="2">330 uM for zeatin (at pH 7.4 and 37 degrees Celsius)</KM>
        <KM evidence="2">110 uM for isopentenyladenine (at pH 7.4 and 37 degrees Celsius)</KM>
        <KM evidence="2">15 uM for benzyladenine (at pH 7.4 and 37 degrees Celsius)</KM>
        <Vmax evidence="2">0.31 umol/min/mg enzyme with adenine as substrate (at pH 7.4 and 37 degrees Celsius)</Vmax>
        <Vmax evidence="2">1.0 umol/min/mg enzyme with zeatin as substrate (at pH 7.4 and 37 degrees Celsius)</Vmax>
        <Vmax evidence="2">0.36 umol/min/mg enzyme with isopentenyladenine as substrate (at pH 7.4 and 37 degrees Celsius)</Vmax>
        <Vmax evidence="2">0.1 umol/min/mg enzyme with benzyladenine as substrate (at pH 7.4 and 37 degrees Celsius)</Vmax>
    </kinetics>
    <phDependence>
        <text evidence="2">Optimum pH is 7.4-7.5.</text>
    </phDependence>
</comment>
<comment type="pathway">
    <text>Purine metabolism; AMP biosynthesis via salvage pathway; AMP from adenine: step 1/1.</text>
</comment>
<comment type="subunit">
    <text evidence="1">Homodimer.</text>
</comment>
<comment type="subcellular location">
    <subcellularLocation>
        <location evidence="5">Cytoplasm</location>
    </subcellularLocation>
</comment>
<comment type="similarity">
    <text evidence="4">Belongs to the purine/pyrimidine phosphoribosyltransferase family.</text>
</comment>
<sequence length="192" mass="21009">MFAVENGLQGDPRLKAISDAIRVIPHFPKTGIMFQDITTLLLDPVAFKHVVDIFVDRYKHMNISLVAGVEARGFIFGPPIALAIGAKFVPLRKPGKLPGRVISEEYELEYGRDCLEMSVEAVKSEERALIIDDLVATGGTLSASINLLERAGAEVVECACVVGLPKFKGQCKLKGKPLYVLVEPNQFDELTL</sequence>
<protein>
    <recommendedName>
        <fullName>Adenine phosphoribosyltransferase 2</fullName>
        <shortName>APRT 2</shortName>
        <shortName>AtAPT2</shortName>
        <ecNumber>2.4.2.7</ecNumber>
    </recommendedName>
</protein>
<dbReference type="EC" id="2.4.2.7"/>
<dbReference type="EMBL" id="X96866">
    <property type="protein sequence ID" value="CAA65609.1"/>
    <property type="molecule type" value="mRNA"/>
</dbReference>
<dbReference type="EMBL" id="X96867">
    <property type="protein sequence ID" value="CAA65610.1"/>
    <property type="molecule type" value="Genomic_DNA"/>
</dbReference>
<dbReference type="EMBL" id="AC009322">
    <property type="protein sequence ID" value="AAD55485.1"/>
    <property type="molecule type" value="Genomic_DNA"/>
</dbReference>
<dbReference type="EMBL" id="CP002684">
    <property type="protein sequence ID" value="AEE36351.1"/>
    <property type="molecule type" value="Genomic_DNA"/>
</dbReference>
<dbReference type="EMBL" id="AY072021">
    <property type="protein sequence ID" value="AAL57714.1"/>
    <property type="molecule type" value="mRNA"/>
</dbReference>
<dbReference type="EMBL" id="BT001122">
    <property type="protein sequence ID" value="AAN64513.1"/>
    <property type="molecule type" value="mRNA"/>
</dbReference>
<dbReference type="PIR" id="S71272">
    <property type="entry name" value="S71272"/>
</dbReference>
<dbReference type="RefSeq" id="NP_178122.1">
    <property type="nucleotide sequence ID" value="NM_106654.3"/>
</dbReference>
<dbReference type="SMR" id="Q42563"/>
<dbReference type="BioGRID" id="29563">
    <property type="interactions" value="2"/>
</dbReference>
<dbReference type="FunCoup" id="Q42563">
    <property type="interactions" value="2080"/>
</dbReference>
<dbReference type="IntAct" id="Q42563">
    <property type="interactions" value="2"/>
</dbReference>
<dbReference type="STRING" id="3702.Q42563"/>
<dbReference type="PaxDb" id="3702-AT1G80050.1"/>
<dbReference type="ProteomicsDB" id="246594"/>
<dbReference type="EnsemblPlants" id="AT1G80050.1">
    <property type="protein sequence ID" value="AT1G80050.1"/>
    <property type="gene ID" value="AT1G80050"/>
</dbReference>
<dbReference type="GeneID" id="844345"/>
<dbReference type="Gramene" id="AT1G80050.1">
    <property type="protein sequence ID" value="AT1G80050.1"/>
    <property type="gene ID" value="AT1G80050"/>
</dbReference>
<dbReference type="KEGG" id="ath:AT1G80050"/>
<dbReference type="Araport" id="AT1G80050"/>
<dbReference type="TAIR" id="AT1G80050">
    <property type="gene designation" value="APT2"/>
</dbReference>
<dbReference type="eggNOG" id="KOG1712">
    <property type="taxonomic scope" value="Eukaryota"/>
</dbReference>
<dbReference type="HOGENOM" id="CLU_063339_0_3_1"/>
<dbReference type="InParanoid" id="Q42563"/>
<dbReference type="OMA" id="YEHMNIS"/>
<dbReference type="PhylomeDB" id="Q42563"/>
<dbReference type="BioCyc" id="ARA:AT1G80050-MONOMER"/>
<dbReference type="UniPathway" id="UPA00588">
    <property type="reaction ID" value="UER00646"/>
</dbReference>
<dbReference type="PRO" id="PR:Q42563"/>
<dbReference type="Proteomes" id="UP000006548">
    <property type="component" value="Chromosome 1"/>
</dbReference>
<dbReference type="ExpressionAtlas" id="Q42563">
    <property type="expression patterns" value="baseline and differential"/>
</dbReference>
<dbReference type="GO" id="GO:0005829">
    <property type="term" value="C:cytosol"/>
    <property type="evidence" value="ECO:0000250"/>
    <property type="project" value="TAIR"/>
</dbReference>
<dbReference type="GO" id="GO:0005794">
    <property type="term" value="C:Golgi apparatus"/>
    <property type="evidence" value="ECO:0007005"/>
    <property type="project" value="TAIR"/>
</dbReference>
<dbReference type="GO" id="GO:0005886">
    <property type="term" value="C:plasma membrane"/>
    <property type="evidence" value="ECO:0007005"/>
    <property type="project" value="TAIR"/>
</dbReference>
<dbReference type="GO" id="GO:0003999">
    <property type="term" value="F:adenine phosphoribosyltransferase activity"/>
    <property type="evidence" value="ECO:0000314"/>
    <property type="project" value="TAIR"/>
</dbReference>
<dbReference type="GO" id="GO:0006168">
    <property type="term" value="P:adenine salvage"/>
    <property type="evidence" value="ECO:0000304"/>
    <property type="project" value="TAIR"/>
</dbReference>
<dbReference type="GO" id="GO:0044209">
    <property type="term" value="P:AMP salvage"/>
    <property type="evidence" value="ECO:0007669"/>
    <property type="project" value="UniProtKB-UniPathway"/>
</dbReference>
<dbReference type="GO" id="GO:0006166">
    <property type="term" value="P:purine ribonucleoside salvage"/>
    <property type="evidence" value="ECO:0007669"/>
    <property type="project" value="UniProtKB-KW"/>
</dbReference>
<dbReference type="CDD" id="cd06223">
    <property type="entry name" value="PRTases_typeI"/>
    <property type="match status" value="1"/>
</dbReference>
<dbReference type="FunFam" id="3.40.50.2020:FF:000022">
    <property type="entry name" value="Adenine phosphoribosyltransferase 1"/>
    <property type="match status" value="1"/>
</dbReference>
<dbReference type="Gene3D" id="3.40.50.2020">
    <property type="match status" value="1"/>
</dbReference>
<dbReference type="HAMAP" id="MF_00004">
    <property type="entry name" value="Aden_phosphoribosyltr"/>
    <property type="match status" value="1"/>
</dbReference>
<dbReference type="InterPro" id="IPR005764">
    <property type="entry name" value="Ade_phspho_trans"/>
</dbReference>
<dbReference type="InterPro" id="IPR050120">
    <property type="entry name" value="Adenine_PRTase"/>
</dbReference>
<dbReference type="InterPro" id="IPR000836">
    <property type="entry name" value="PRibTrfase_dom"/>
</dbReference>
<dbReference type="InterPro" id="IPR029057">
    <property type="entry name" value="PRTase-like"/>
</dbReference>
<dbReference type="NCBIfam" id="TIGR01090">
    <property type="entry name" value="apt"/>
    <property type="match status" value="1"/>
</dbReference>
<dbReference type="NCBIfam" id="NF002634">
    <property type="entry name" value="PRK02304.1-3"/>
    <property type="match status" value="1"/>
</dbReference>
<dbReference type="NCBIfam" id="NF002636">
    <property type="entry name" value="PRK02304.1-5"/>
    <property type="match status" value="1"/>
</dbReference>
<dbReference type="PANTHER" id="PTHR11776">
    <property type="entry name" value="ADENINE PHOSPHORIBOSYLTRANSFERASE"/>
    <property type="match status" value="1"/>
</dbReference>
<dbReference type="PANTHER" id="PTHR11776:SF23">
    <property type="entry name" value="ADENINE PHOSPHORIBOSYLTRANSFERASE 2"/>
    <property type="match status" value="1"/>
</dbReference>
<dbReference type="Pfam" id="PF00156">
    <property type="entry name" value="Pribosyltran"/>
    <property type="match status" value="1"/>
</dbReference>
<dbReference type="SUPFAM" id="SSF53271">
    <property type="entry name" value="PRTase-like"/>
    <property type="match status" value="1"/>
</dbReference>
<dbReference type="PROSITE" id="PS00103">
    <property type="entry name" value="PUR_PYR_PR_TRANSFER"/>
    <property type="match status" value="1"/>
</dbReference>
<keyword id="KW-0963">Cytoplasm</keyword>
<keyword id="KW-0328">Glycosyltransferase</keyword>
<keyword id="KW-0660">Purine salvage</keyword>
<keyword id="KW-1185">Reference proteome</keyword>
<keyword id="KW-0808">Transferase</keyword>
<reference key="1">
    <citation type="journal article" date="1996" name="Plant J.">
        <title>A second form of adenine phosphoribosyltransferase in Arabidopsis thaliana with relative specificity towards cytokinins.</title>
        <authorList>
            <person name="Schnorr K.M."/>
            <person name="Gaillard C."/>
            <person name="Biget E."/>
            <person name="Nygaard P."/>
            <person name="Laloue M."/>
        </authorList>
    </citation>
    <scope>NUCLEOTIDE SEQUENCE [GENOMIC DNA / MRNA]</scope>
    <source>
        <strain>cv. Columbia</strain>
    </source>
</reference>
<reference key="2">
    <citation type="journal article" date="2000" name="Nature">
        <title>Sequence and analysis of chromosome 1 of the plant Arabidopsis thaliana.</title>
        <authorList>
            <person name="Theologis A."/>
            <person name="Ecker J.R."/>
            <person name="Palm C.J."/>
            <person name="Federspiel N.A."/>
            <person name="Kaul S."/>
            <person name="White O."/>
            <person name="Alonso J."/>
            <person name="Altafi H."/>
            <person name="Araujo R."/>
            <person name="Bowman C.L."/>
            <person name="Brooks S.Y."/>
            <person name="Buehler E."/>
            <person name="Chan A."/>
            <person name="Chao Q."/>
            <person name="Chen H."/>
            <person name="Cheuk R.F."/>
            <person name="Chin C.W."/>
            <person name="Chung M.K."/>
            <person name="Conn L."/>
            <person name="Conway A.B."/>
            <person name="Conway A.R."/>
            <person name="Creasy T.H."/>
            <person name="Dewar K."/>
            <person name="Dunn P."/>
            <person name="Etgu P."/>
            <person name="Feldblyum T.V."/>
            <person name="Feng J.-D."/>
            <person name="Fong B."/>
            <person name="Fujii C.Y."/>
            <person name="Gill J.E."/>
            <person name="Goldsmith A.D."/>
            <person name="Haas B."/>
            <person name="Hansen N.F."/>
            <person name="Hughes B."/>
            <person name="Huizar L."/>
            <person name="Hunter J.L."/>
            <person name="Jenkins J."/>
            <person name="Johnson-Hopson C."/>
            <person name="Khan S."/>
            <person name="Khaykin E."/>
            <person name="Kim C.J."/>
            <person name="Koo H.L."/>
            <person name="Kremenetskaia I."/>
            <person name="Kurtz D.B."/>
            <person name="Kwan A."/>
            <person name="Lam B."/>
            <person name="Langin-Hooper S."/>
            <person name="Lee A."/>
            <person name="Lee J.M."/>
            <person name="Lenz C.A."/>
            <person name="Li J.H."/>
            <person name="Li Y.-P."/>
            <person name="Lin X."/>
            <person name="Liu S.X."/>
            <person name="Liu Z.A."/>
            <person name="Luros J.S."/>
            <person name="Maiti R."/>
            <person name="Marziali A."/>
            <person name="Militscher J."/>
            <person name="Miranda M."/>
            <person name="Nguyen M."/>
            <person name="Nierman W.C."/>
            <person name="Osborne B.I."/>
            <person name="Pai G."/>
            <person name="Peterson J."/>
            <person name="Pham P.K."/>
            <person name="Rizzo M."/>
            <person name="Rooney T."/>
            <person name="Rowley D."/>
            <person name="Sakano H."/>
            <person name="Salzberg S.L."/>
            <person name="Schwartz J.R."/>
            <person name="Shinn P."/>
            <person name="Southwick A.M."/>
            <person name="Sun H."/>
            <person name="Tallon L.J."/>
            <person name="Tambunga G."/>
            <person name="Toriumi M.J."/>
            <person name="Town C.D."/>
            <person name="Utterback T."/>
            <person name="Van Aken S."/>
            <person name="Vaysberg M."/>
            <person name="Vysotskaia V.S."/>
            <person name="Walker M."/>
            <person name="Wu D."/>
            <person name="Yu G."/>
            <person name="Fraser C.M."/>
            <person name="Venter J.C."/>
            <person name="Davis R.W."/>
        </authorList>
    </citation>
    <scope>NUCLEOTIDE SEQUENCE [LARGE SCALE GENOMIC DNA]</scope>
    <source>
        <strain>cv. Columbia</strain>
    </source>
</reference>
<reference key="3">
    <citation type="journal article" date="2017" name="Plant J.">
        <title>Araport11: a complete reannotation of the Arabidopsis thaliana reference genome.</title>
        <authorList>
            <person name="Cheng C.Y."/>
            <person name="Krishnakumar V."/>
            <person name="Chan A.P."/>
            <person name="Thibaud-Nissen F."/>
            <person name="Schobel S."/>
            <person name="Town C.D."/>
        </authorList>
    </citation>
    <scope>GENOME REANNOTATION</scope>
    <source>
        <strain>cv. Columbia</strain>
    </source>
</reference>
<reference key="4">
    <citation type="journal article" date="2003" name="Science">
        <title>Empirical analysis of transcriptional activity in the Arabidopsis genome.</title>
        <authorList>
            <person name="Yamada K."/>
            <person name="Lim J."/>
            <person name="Dale J.M."/>
            <person name="Chen H."/>
            <person name="Shinn P."/>
            <person name="Palm C.J."/>
            <person name="Southwick A.M."/>
            <person name="Wu H.C."/>
            <person name="Kim C.J."/>
            <person name="Nguyen M."/>
            <person name="Pham P.K."/>
            <person name="Cheuk R.F."/>
            <person name="Karlin-Newmann G."/>
            <person name="Liu S.X."/>
            <person name="Lam B."/>
            <person name="Sakano H."/>
            <person name="Wu T."/>
            <person name="Yu G."/>
            <person name="Miranda M."/>
            <person name="Quach H.L."/>
            <person name="Tripp M."/>
            <person name="Chang C.H."/>
            <person name="Lee J.M."/>
            <person name="Toriumi M.J."/>
            <person name="Chan M.M."/>
            <person name="Tang C.C."/>
            <person name="Onodera C.S."/>
            <person name="Deng J.M."/>
            <person name="Akiyama K."/>
            <person name="Ansari Y."/>
            <person name="Arakawa T."/>
            <person name="Banh J."/>
            <person name="Banno F."/>
            <person name="Bowser L."/>
            <person name="Brooks S.Y."/>
            <person name="Carninci P."/>
            <person name="Chao Q."/>
            <person name="Choy N."/>
            <person name="Enju A."/>
            <person name="Goldsmith A.D."/>
            <person name="Gurjal M."/>
            <person name="Hansen N.F."/>
            <person name="Hayashizaki Y."/>
            <person name="Johnson-Hopson C."/>
            <person name="Hsuan V.W."/>
            <person name="Iida K."/>
            <person name="Karnes M."/>
            <person name="Khan S."/>
            <person name="Koesema E."/>
            <person name="Ishida J."/>
            <person name="Jiang P.X."/>
            <person name="Jones T."/>
            <person name="Kawai J."/>
            <person name="Kamiya A."/>
            <person name="Meyers C."/>
            <person name="Nakajima M."/>
            <person name="Narusaka M."/>
            <person name="Seki M."/>
            <person name="Sakurai T."/>
            <person name="Satou M."/>
            <person name="Tamse R."/>
            <person name="Vaysberg M."/>
            <person name="Wallender E.K."/>
            <person name="Wong C."/>
            <person name="Yamamura Y."/>
            <person name="Yuan S."/>
            <person name="Shinozaki K."/>
            <person name="Davis R.W."/>
            <person name="Theologis A."/>
            <person name="Ecker J.R."/>
        </authorList>
    </citation>
    <scope>NUCLEOTIDE SEQUENCE [LARGE SCALE MRNA]</scope>
    <source>
        <strain>cv. Columbia</strain>
    </source>
</reference>
<reference key="5">
    <citation type="journal article" date="2002" name="Physiol. Plantarum">
        <title>Adenine phosphoribosyltransferase isoforms of Arabidopsis and their potential contributions to adenine and cytokinin metabolism.</title>
        <authorList>
            <person name="Allen M."/>
            <person name="Qin W."/>
            <person name="Moreau F."/>
            <person name="Moffatt B."/>
        </authorList>
    </citation>
    <scope>FUNCTION</scope>
    <scope>CATALYTIC ACTIVITY</scope>
    <scope>BIOPHYSICOCHEMICAL PROPERTIES</scope>
    <scope>SUBCELLULAR LOCATION</scope>
</reference>
<reference key="6">
    <citation type="journal article" date="2013" name="Mol. Plant">
        <title>Adenine phosphoribosyl transferase 1 is a key enzyme catalyzing cytokinin conversion from nucleobases to nucleotides in Arabidopsis.</title>
        <authorList>
            <person name="Zhang X."/>
            <person name="Chen Y."/>
            <person name="Lin X."/>
            <person name="Hong X."/>
            <person name="Zhu Y."/>
            <person name="Li W."/>
            <person name="He W."/>
            <person name="An F."/>
            <person name="Guo H."/>
        </authorList>
    </citation>
    <scope>FUNCTION</scope>
    <scope>CATALYTIC ACTIVITY</scope>
</reference>
<gene>
    <name type="primary">APT2</name>
    <name type="ordered locus">At1g80050</name>
    <name type="ORF">F18B13.14</name>
</gene>
<evidence type="ECO:0000250" key="1"/>
<evidence type="ECO:0000269" key="2">
    <source>
    </source>
</evidence>
<evidence type="ECO:0000269" key="3">
    <source>
    </source>
</evidence>
<evidence type="ECO:0000305" key="4"/>
<evidence type="ECO:0000305" key="5">
    <source>
    </source>
</evidence>
<proteinExistence type="evidence at protein level"/>
<feature type="chain" id="PRO_0000149515" description="Adenine phosphoribosyltransferase 2">
    <location>
        <begin position="1"/>
        <end position="192"/>
    </location>
</feature>
<feature type="sequence conflict" description="In Ref. 1; CAA65610." evidence="4" ref="1">
    <original>L</original>
    <variation>M</variation>
    <location>
        <position position="40"/>
    </location>
</feature>
<organism>
    <name type="scientific">Arabidopsis thaliana</name>
    <name type="common">Mouse-ear cress</name>
    <dbReference type="NCBI Taxonomy" id="3702"/>
    <lineage>
        <taxon>Eukaryota</taxon>
        <taxon>Viridiplantae</taxon>
        <taxon>Streptophyta</taxon>
        <taxon>Embryophyta</taxon>
        <taxon>Tracheophyta</taxon>
        <taxon>Spermatophyta</taxon>
        <taxon>Magnoliopsida</taxon>
        <taxon>eudicotyledons</taxon>
        <taxon>Gunneridae</taxon>
        <taxon>Pentapetalae</taxon>
        <taxon>rosids</taxon>
        <taxon>malvids</taxon>
        <taxon>Brassicales</taxon>
        <taxon>Brassicaceae</taxon>
        <taxon>Camelineae</taxon>
        <taxon>Arabidopsis</taxon>
    </lineage>
</organism>